<comment type="function">
    <text evidence="1">Catalyzes the condensation of (S)-aspartate-beta-semialdehyde [(S)-ASA] and pyruvate to 4-hydroxy-tetrahydrodipicolinate (HTPA).</text>
</comment>
<comment type="catalytic activity">
    <reaction evidence="1">
        <text>L-aspartate 4-semialdehyde + pyruvate = (2S,4S)-4-hydroxy-2,3,4,5-tetrahydrodipicolinate + H2O + H(+)</text>
        <dbReference type="Rhea" id="RHEA:34171"/>
        <dbReference type="ChEBI" id="CHEBI:15361"/>
        <dbReference type="ChEBI" id="CHEBI:15377"/>
        <dbReference type="ChEBI" id="CHEBI:15378"/>
        <dbReference type="ChEBI" id="CHEBI:67139"/>
        <dbReference type="ChEBI" id="CHEBI:537519"/>
        <dbReference type="EC" id="4.3.3.7"/>
    </reaction>
</comment>
<comment type="pathway">
    <text evidence="1">Amino-acid biosynthesis; L-lysine biosynthesis via DAP pathway; (S)-tetrahydrodipicolinate from L-aspartate: step 3/4.</text>
</comment>
<comment type="subunit">
    <text evidence="1">Homodimer.</text>
</comment>
<comment type="subcellular location">
    <subcellularLocation>
        <location evidence="1">Cytoplasm</location>
    </subcellularLocation>
</comment>
<comment type="similarity">
    <text evidence="1">Belongs to the DapA family.</text>
</comment>
<comment type="caution">
    <text evidence="2">Was originally thought to be a dihydrodipicolinate synthase (DHDPS), catalyzing the condensation of (S)-aspartate-beta-semialdehyde [(S)-ASA] and pyruvate to dihydrodipicolinate (DHDP). However, it was shown in E.coli that the product of the enzymatic reaction is not dihydrodipicolinate but in fact (4S)-4-hydroxy-2,3,4,5-tetrahydro-(2S)-dipicolinic acid (HTPA), and that the consecutive dehydration reaction leading to DHDP is not spontaneous but catalyzed by DapB.</text>
</comment>
<protein>
    <recommendedName>
        <fullName evidence="1">4-hydroxy-tetrahydrodipicolinate synthase</fullName>
        <shortName evidence="1">HTPA synthase</shortName>
        <ecNumber evidence="1">4.3.3.7</ecNumber>
    </recommendedName>
</protein>
<feature type="chain" id="PRO_1000072294" description="4-hydroxy-tetrahydrodipicolinate synthase">
    <location>
        <begin position="1"/>
        <end position="295"/>
    </location>
</feature>
<feature type="active site" description="Proton donor/acceptor" evidence="1">
    <location>
        <position position="135"/>
    </location>
</feature>
<feature type="active site" description="Schiff-base intermediate with substrate" evidence="1">
    <location>
        <position position="163"/>
    </location>
</feature>
<feature type="binding site" evidence="1">
    <location>
        <position position="47"/>
    </location>
    <ligand>
        <name>pyruvate</name>
        <dbReference type="ChEBI" id="CHEBI:15361"/>
    </ligand>
</feature>
<feature type="binding site" evidence="1">
    <location>
        <position position="206"/>
    </location>
    <ligand>
        <name>pyruvate</name>
        <dbReference type="ChEBI" id="CHEBI:15361"/>
    </ligand>
</feature>
<feature type="site" description="Part of a proton relay during catalysis" evidence="1">
    <location>
        <position position="46"/>
    </location>
</feature>
<feature type="site" description="Part of a proton relay during catalysis" evidence="1">
    <location>
        <position position="109"/>
    </location>
</feature>
<organism>
    <name type="scientific">Staphylococcus aureus (strain Newman)</name>
    <dbReference type="NCBI Taxonomy" id="426430"/>
    <lineage>
        <taxon>Bacteria</taxon>
        <taxon>Bacillati</taxon>
        <taxon>Bacillota</taxon>
        <taxon>Bacilli</taxon>
        <taxon>Bacillales</taxon>
        <taxon>Staphylococcaceae</taxon>
        <taxon>Staphylococcus</taxon>
    </lineage>
</organism>
<name>DAPA_STAAE</name>
<proteinExistence type="inferred from homology"/>
<keyword id="KW-0028">Amino-acid biosynthesis</keyword>
<keyword id="KW-0963">Cytoplasm</keyword>
<keyword id="KW-0220">Diaminopimelate biosynthesis</keyword>
<keyword id="KW-0456">Lyase</keyword>
<keyword id="KW-0457">Lysine biosynthesis</keyword>
<keyword id="KW-0704">Schiff base</keyword>
<gene>
    <name evidence="1" type="primary">dapA</name>
    <name type="ordered locus">NWMN_1306</name>
</gene>
<evidence type="ECO:0000255" key="1">
    <source>
        <dbReference type="HAMAP-Rule" id="MF_00418"/>
    </source>
</evidence>
<evidence type="ECO:0000305" key="2"/>
<sequence>MTHLFEGVGVALTTPFTNNKVNIEALKTHVNFLLENNAQAIIVNGTTAESPTLTTDEKERILKTVIDLVDKRVPVIAGTGTNDTEKSIQASIQAKALGADAIMLITPYYNKTNQRGLVKHFEAIADAVKLPVVLYNVPSRTNMTIEPETVEILSQHPYIVALKDATNDFEYLEEVKKRIDTNSFALYSGNDDNVVEYYQRGGQGVISVIANVIPKEFQALYDAQQSGLDIQDQFKPIGTLLSALSVDINPIPIKALTSYLGFGNYELRLPLVSLEDTDTKVLRETYDTFKAGENE</sequence>
<reference key="1">
    <citation type="journal article" date="2008" name="J. Bacteriol.">
        <title>Genome sequence of Staphylococcus aureus strain Newman and comparative analysis of staphylococcal genomes: polymorphism and evolution of two major pathogenicity islands.</title>
        <authorList>
            <person name="Baba T."/>
            <person name="Bae T."/>
            <person name="Schneewind O."/>
            <person name="Takeuchi F."/>
            <person name="Hiramatsu K."/>
        </authorList>
    </citation>
    <scope>NUCLEOTIDE SEQUENCE [LARGE SCALE GENOMIC DNA]</scope>
    <source>
        <strain>Newman</strain>
    </source>
</reference>
<accession>A6QGU6</accession>
<dbReference type="EC" id="4.3.3.7" evidence="1"/>
<dbReference type="EMBL" id="AP009351">
    <property type="protein sequence ID" value="BAF67578.1"/>
    <property type="molecule type" value="Genomic_DNA"/>
</dbReference>
<dbReference type="RefSeq" id="WP_000149257.1">
    <property type="nucleotide sequence ID" value="NZ_JBBIAE010000001.1"/>
</dbReference>
<dbReference type="SMR" id="A6QGU6"/>
<dbReference type="KEGG" id="sae:NWMN_1306"/>
<dbReference type="HOGENOM" id="CLU_049343_7_0_9"/>
<dbReference type="UniPathway" id="UPA00034">
    <property type="reaction ID" value="UER00017"/>
</dbReference>
<dbReference type="Proteomes" id="UP000006386">
    <property type="component" value="Chromosome"/>
</dbReference>
<dbReference type="GO" id="GO:0005829">
    <property type="term" value="C:cytosol"/>
    <property type="evidence" value="ECO:0007669"/>
    <property type="project" value="TreeGrafter"/>
</dbReference>
<dbReference type="GO" id="GO:0008840">
    <property type="term" value="F:4-hydroxy-tetrahydrodipicolinate synthase activity"/>
    <property type="evidence" value="ECO:0007669"/>
    <property type="project" value="UniProtKB-UniRule"/>
</dbReference>
<dbReference type="GO" id="GO:0019877">
    <property type="term" value="P:diaminopimelate biosynthetic process"/>
    <property type="evidence" value="ECO:0007669"/>
    <property type="project" value="UniProtKB-UniRule"/>
</dbReference>
<dbReference type="GO" id="GO:0009089">
    <property type="term" value="P:lysine biosynthetic process via diaminopimelate"/>
    <property type="evidence" value="ECO:0007669"/>
    <property type="project" value="UniProtKB-UniRule"/>
</dbReference>
<dbReference type="CDD" id="cd00950">
    <property type="entry name" value="DHDPS"/>
    <property type="match status" value="1"/>
</dbReference>
<dbReference type="Gene3D" id="3.20.20.70">
    <property type="entry name" value="Aldolase class I"/>
    <property type="match status" value="1"/>
</dbReference>
<dbReference type="HAMAP" id="MF_00418">
    <property type="entry name" value="DapA"/>
    <property type="match status" value="1"/>
</dbReference>
<dbReference type="InterPro" id="IPR013785">
    <property type="entry name" value="Aldolase_TIM"/>
</dbReference>
<dbReference type="InterPro" id="IPR005263">
    <property type="entry name" value="DapA"/>
</dbReference>
<dbReference type="InterPro" id="IPR002220">
    <property type="entry name" value="DapA-like"/>
</dbReference>
<dbReference type="InterPro" id="IPR020625">
    <property type="entry name" value="Schiff_base-form_aldolases_AS"/>
</dbReference>
<dbReference type="NCBIfam" id="TIGR00674">
    <property type="entry name" value="dapA"/>
    <property type="match status" value="1"/>
</dbReference>
<dbReference type="PANTHER" id="PTHR12128:SF66">
    <property type="entry name" value="4-HYDROXY-2-OXOGLUTARATE ALDOLASE, MITOCHONDRIAL"/>
    <property type="match status" value="1"/>
</dbReference>
<dbReference type="PANTHER" id="PTHR12128">
    <property type="entry name" value="DIHYDRODIPICOLINATE SYNTHASE"/>
    <property type="match status" value="1"/>
</dbReference>
<dbReference type="Pfam" id="PF00701">
    <property type="entry name" value="DHDPS"/>
    <property type="match status" value="1"/>
</dbReference>
<dbReference type="PIRSF" id="PIRSF001365">
    <property type="entry name" value="DHDPS"/>
    <property type="match status" value="1"/>
</dbReference>
<dbReference type="PRINTS" id="PR00146">
    <property type="entry name" value="DHPICSNTHASE"/>
</dbReference>
<dbReference type="SMART" id="SM01130">
    <property type="entry name" value="DHDPS"/>
    <property type="match status" value="1"/>
</dbReference>
<dbReference type="SUPFAM" id="SSF51569">
    <property type="entry name" value="Aldolase"/>
    <property type="match status" value="1"/>
</dbReference>
<dbReference type="PROSITE" id="PS00666">
    <property type="entry name" value="DHDPS_2"/>
    <property type="match status" value="1"/>
</dbReference>